<accession>C1KY87</accession>
<feature type="chain" id="PRO_1000201937" description="SsrA-binding protein">
    <location>
        <begin position="1"/>
        <end position="154"/>
    </location>
</feature>
<feature type="region of interest" description="Disordered" evidence="2">
    <location>
        <begin position="131"/>
        <end position="154"/>
    </location>
</feature>
<feature type="compositionally biased region" description="Basic and acidic residues" evidence="2">
    <location>
        <begin position="132"/>
        <end position="154"/>
    </location>
</feature>
<proteinExistence type="inferred from homology"/>
<comment type="function">
    <text evidence="1">Required for rescue of stalled ribosomes mediated by trans-translation. Binds to transfer-messenger RNA (tmRNA), required for stable association of tmRNA with ribosomes. tmRNA and SmpB together mimic tRNA shape, replacing the anticodon stem-loop with SmpB. tmRNA is encoded by the ssrA gene; the 2 termini fold to resemble tRNA(Ala) and it encodes a 'tag peptide', a short internal open reading frame. During trans-translation Ala-aminoacylated tmRNA acts like a tRNA, entering the A-site of stalled ribosomes, displacing the stalled mRNA. The ribosome then switches to translate the ORF on the tmRNA; the nascent peptide is terminated with the 'tag peptide' encoded by the tmRNA and targeted for degradation. The ribosome is freed to recommence translation, which seems to be the essential function of trans-translation.</text>
</comment>
<comment type="subcellular location">
    <subcellularLocation>
        <location evidence="1">Cytoplasm</location>
    </subcellularLocation>
    <text evidence="1">The tmRNA-SmpB complex associates with stalled 70S ribosomes.</text>
</comment>
<comment type="similarity">
    <text evidence="1">Belongs to the SmpB family.</text>
</comment>
<dbReference type="EMBL" id="FM242711">
    <property type="protein sequence ID" value="CAS06172.1"/>
    <property type="molecule type" value="Genomic_DNA"/>
</dbReference>
<dbReference type="RefSeq" id="WP_003723350.1">
    <property type="nucleotide sequence ID" value="NC_012488.1"/>
</dbReference>
<dbReference type="SMR" id="C1KY87"/>
<dbReference type="GeneID" id="93240313"/>
<dbReference type="KEGG" id="lmc:Lm4b_02417"/>
<dbReference type="HOGENOM" id="CLU_108953_0_0_9"/>
<dbReference type="GO" id="GO:0005829">
    <property type="term" value="C:cytosol"/>
    <property type="evidence" value="ECO:0007669"/>
    <property type="project" value="TreeGrafter"/>
</dbReference>
<dbReference type="GO" id="GO:0003723">
    <property type="term" value="F:RNA binding"/>
    <property type="evidence" value="ECO:0007669"/>
    <property type="project" value="UniProtKB-UniRule"/>
</dbReference>
<dbReference type="GO" id="GO:0070929">
    <property type="term" value="P:trans-translation"/>
    <property type="evidence" value="ECO:0007669"/>
    <property type="project" value="UniProtKB-UniRule"/>
</dbReference>
<dbReference type="CDD" id="cd09294">
    <property type="entry name" value="SmpB"/>
    <property type="match status" value="1"/>
</dbReference>
<dbReference type="Gene3D" id="2.40.280.10">
    <property type="match status" value="1"/>
</dbReference>
<dbReference type="HAMAP" id="MF_00023">
    <property type="entry name" value="SmpB"/>
    <property type="match status" value="1"/>
</dbReference>
<dbReference type="InterPro" id="IPR023620">
    <property type="entry name" value="SmpB"/>
</dbReference>
<dbReference type="InterPro" id="IPR000037">
    <property type="entry name" value="SsrA-bd_prot"/>
</dbReference>
<dbReference type="InterPro" id="IPR020081">
    <property type="entry name" value="SsrA-bd_prot_CS"/>
</dbReference>
<dbReference type="NCBIfam" id="NF003843">
    <property type="entry name" value="PRK05422.1"/>
    <property type="match status" value="1"/>
</dbReference>
<dbReference type="NCBIfam" id="TIGR00086">
    <property type="entry name" value="smpB"/>
    <property type="match status" value="1"/>
</dbReference>
<dbReference type="PANTHER" id="PTHR30308:SF2">
    <property type="entry name" value="SSRA-BINDING PROTEIN"/>
    <property type="match status" value="1"/>
</dbReference>
<dbReference type="PANTHER" id="PTHR30308">
    <property type="entry name" value="TMRNA-BINDING COMPONENT OF TRANS-TRANSLATION TAGGING COMPLEX"/>
    <property type="match status" value="1"/>
</dbReference>
<dbReference type="Pfam" id="PF01668">
    <property type="entry name" value="SmpB"/>
    <property type="match status" value="1"/>
</dbReference>
<dbReference type="SUPFAM" id="SSF74982">
    <property type="entry name" value="Small protein B (SmpB)"/>
    <property type="match status" value="1"/>
</dbReference>
<dbReference type="PROSITE" id="PS01317">
    <property type="entry name" value="SSRP"/>
    <property type="match status" value="1"/>
</dbReference>
<evidence type="ECO:0000255" key="1">
    <source>
        <dbReference type="HAMAP-Rule" id="MF_00023"/>
    </source>
</evidence>
<evidence type="ECO:0000256" key="2">
    <source>
        <dbReference type="SAM" id="MobiDB-lite"/>
    </source>
</evidence>
<protein>
    <recommendedName>
        <fullName evidence="1">SsrA-binding protein</fullName>
    </recommendedName>
    <alternativeName>
        <fullName evidence="1">Small protein B</fullName>
    </alternativeName>
</protein>
<keyword id="KW-0963">Cytoplasm</keyword>
<keyword id="KW-0694">RNA-binding</keyword>
<reference key="1">
    <citation type="journal article" date="2012" name="BMC Genomics">
        <title>Comparative genomics and transcriptomics of lineages I, II, and III strains of Listeria monocytogenes.</title>
        <authorList>
            <person name="Hain T."/>
            <person name="Ghai R."/>
            <person name="Billion A."/>
            <person name="Kuenne C.T."/>
            <person name="Steinweg C."/>
            <person name="Izar B."/>
            <person name="Mohamed W."/>
            <person name="Mraheil M."/>
            <person name="Domann E."/>
            <person name="Schaffrath S."/>
            <person name="Karst U."/>
            <person name="Goesmann A."/>
            <person name="Oehm S."/>
            <person name="Puhler A."/>
            <person name="Merkl R."/>
            <person name="Vorwerk S."/>
            <person name="Glaser P."/>
            <person name="Garrido P."/>
            <person name="Rusniok C."/>
            <person name="Buchrieser C."/>
            <person name="Goebel W."/>
            <person name="Chakraborty T."/>
        </authorList>
    </citation>
    <scope>NUCLEOTIDE SEQUENCE [LARGE SCALE GENOMIC DNA]</scope>
    <source>
        <strain>CLIP80459</strain>
    </source>
</reference>
<organism>
    <name type="scientific">Listeria monocytogenes serotype 4b (strain CLIP80459)</name>
    <dbReference type="NCBI Taxonomy" id="568819"/>
    <lineage>
        <taxon>Bacteria</taxon>
        <taxon>Bacillati</taxon>
        <taxon>Bacillota</taxon>
        <taxon>Bacilli</taxon>
        <taxon>Bacillales</taxon>
        <taxon>Listeriaceae</taxon>
        <taxon>Listeria</taxon>
    </lineage>
</organism>
<gene>
    <name evidence="1" type="primary">smpB</name>
    <name type="ordered locus">Lm4b_02417</name>
</gene>
<name>SSRP_LISMC</name>
<sequence>MPKGDGKLVAQNKKARHDYAIEETFEAGIVLQGTEIKSVRNARVNLKDSYARIDKGEIFLHNMHISPYEQGNRYNHDPLRTRKLLLHKKQISRLIGETKESGYSIVPLKMYIKDGYAKVLIGVARGKKKYDKRQDLKQKEAKRDIERAFKERQQ</sequence>